<accession>Q31SC2</accession>
<gene>
    <name type="ordered locus">Synpcc7942_0015</name>
</gene>
<dbReference type="EC" id="1.14.11.-" evidence="1"/>
<dbReference type="EMBL" id="CP000100">
    <property type="protein sequence ID" value="ABB56047.1"/>
    <property type="molecule type" value="Genomic_DNA"/>
</dbReference>
<dbReference type="RefSeq" id="WP_011243792.1">
    <property type="nucleotide sequence ID" value="NZ_JACJTX010000002.1"/>
</dbReference>
<dbReference type="SMR" id="Q31SC2"/>
<dbReference type="STRING" id="1140.Synpcc7942_0015"/>
<dbReference type="PaxDb" id="1140-Synpcc7942_0015"/>
<dbReference type="KEGG" id="syf:Synpcc7942_0015"/>
<dbReference type="eggNOG" id="COG3128">
    <property type="taxonomic scope" value="Bacteria"/>
</dbReference>
<dbReference type="HOGENOM" id="CLU_106663_0_0_3"/>
<dbReference type="OrthoDB" id="9812472at2"/>
<dbReference type="BioCyc" id="SYNEL:SYNPCC7942_0015-MONOMER"/>
<dbReference type="Proteomes" id="UP000889800">
    <property type="component" value="Chromosome"/>
</dbReference>
<dbReference type="GO" id="GO:0016706">
    <property type="term" value="F:2-oxoglutarate-dependent dioxygenase activity"/>
    <property type="evidence" value="ECO:0007669"/>
    <property type="project" value="UniProtKB-UniRule"/>
</dbReference>
<dbReference type="GO" id="GO:0005506">
    <property type="term" value="F:iron ion binding"/>
    <property type="evidence" value="ECO:0007669"/>
    <property type="project" value="UniProtKB-UniRule"/>
</dbReference>
<dbReference type="GO" id="GO:0031418">
    <property type="term" value="F:L-ascorbic acid binding"/>
    <property type="evidence" value="ECO:0007669"/>
    <property type="project" value="UniProtKB-KW"/>
</dbReference>
<dbReference type="GO" id="GO:0006974">
    <property type="term" value="P:DNA damage response"/>
    <property type="evidence" value="ECO:0007669"/>
    <property type="project" value="TreeGrafter"/>
</dbReference>
<dbReference type="GO" id="GO:0006879">
    <property type="term" value="P:intracellular iron ion homeostasis"/>
    <property type="evidence" value="ECO:0007669"/>
    <property type="project" value="TreeGrafter"/>
</dbReference>
<dbReference type="Gene3D" id="2.60.120.620">
    <property type="entry name" value="q2cbj1_9rhob like domain"/>
    <property type="match status" value="1"/>
</dbReference>
<dbReference type="Gene3D" id="4.10.860.20">
    <property type="entry name" value="Rabenosyn, Rab binding domain"/>
    <property type="match status" value="1"/>
</dbReference>
<dbReference type="HAMAP" id="MF_00657">
    <property type="entry name" value="Hydroxyl_YbiX"/>
    <property type="match status" value="1"/>
</dbReference>
<dbReference type="InterPro" id="IPR005123">
    <property type="entry name" value="Oxoglu/Fe-dep_dioxygenase_dom"/>
</dbReference>
<dbReference type="InterPro" id="IPR041097">
    <property type="entry name" value="PKHD_C"/>
</dbReference>
<dbReference type="InterPro" id="IPR023550">
    <property type="entry name" value="PKHD_hydroxylase"/>
</dbReference>
<dbReference type="InterPro" id="IPR006620">
    <property type="entry name" value="Pro_4_hyd_alph"/>
</dbReference>
<dbReference type="InterPro" id="IPR044862">
    <property type="entry name" value="Pro_4_hyd_alph_FE2OG_OXY"/>
</dbReference>
<dbReference type="NCBIfam" id="NF003974">
    <property type="entry name" value="PRK05467.1-3"/>
    <property type="match status" value="1"/>
</dbReference>
<dbReference type="NCBIfam" id="NF003975">
    <property type="entry name" value="PRK05467.1-4"/>
    <property type="match status" value="1"/>
</dbReference>
<dbReference type="PANTHER" id="PTHR41536">
    <property type="entry name" value="PKHD-TYPE HYDROXYLASE YBIX"/>
    <property type="match status" value="1"/>
</dbReference>
<dbReference type="PANTHER" id="PTHR41536:SF1">
    <property type="entry name" value="PKHD-TYPE HYDROXYLASE YBIX"/>
    <property type="match status" value="1"/>
</dbReference>
<dbReference type="Pfam" id="PF13640">
    <property type="entry name" value="2OG-FeII_Oxy_3"/>
    <property type="match status" value="1"/>
</dbReference>
<dbReference type="Pfam" id="PF18331">
    <property type="entry name" value="PKHD_C"/>
    <property type="match status" value="1"/>
</dbReference>
<dbReference type="SMART" id="SM00702">
    <property type="entry name" value="P4Hc"/>
    <property type="match status" value="1"/>
</dbReference>
<dbReference type="PROSITE" id="PS51471">
    <property type="entry name" value="FE2OG_OXY"/>
    <property type="match status" value="1"/>
</dbReference>
<protein>
    <recommendedName>
        <fullName evidence="1">PKHD-type hydroxylase Synpcc7942_0015</fullName>
        <ecNumber evidence="1">1.14.11.-</ecNumber>
    </recommendedName>
</protein>
<sequence>MIITIDALLDAAQLNKIQSSLQTAEFIDGRATAGWHAQLVKQNQQLSRTSTLAKSLQEIVQTALQNNALFEAAAYPQRVHSLLFSRYEPGMEYGRHVDNALMGSGDRRDRADLSFTLFLSDPDRYIGGALVIEGACDEQAYRLPAGSLLLYPSSTLHRVDPVEQGYRFACVGWVQSWIRDPAKRELLFDLDTARRSLFTREGKSIEFDLLSKTYANLLRRWSE</sequence>
<feature type="chain" id="PRO_0000346525" description="PKHD-type hydroxylase Synpcc7942_0015">
    <location>
        <begin position="1"/>
        <end position="223"/>
    </location>
</feature>
<feature type="domain" description="Fe2OG dioxygenase" evidence="1">
    <location>
        <begin position="78"/>
        <end position="176"/>
    </location>
</feature>
<feature type="binding site" evidence="1">
    <location>
        <position position="96"/>
    </location>
    <ligand>
        <name>Fe cation</name>
        <dbReference type="ChEBI" id="CHEBI:24875"/>
    </ligand>
</feature>
<feature type="binding site" evidence="1">
    <location>
        <position position="98"/>
    </location>
    <ligand>
        <name>Fe cation</name>
        <dbReference type="ChEBI" id="CHEBI:24875"/>
    </ligand>
</feature>
<feature type="binding site" evidence="1">
    <location>
        <position position="157"/>
    </location>
    <ligand>
        <name>Fe cation</name>
        <dbReference type="ChEBI" id="CHEBI:24875"/>
    </ligand>
</feature>
<feature type="binding site" evidence="1">
    <location>
        <position position="167"/>
    </location>
    <ligand>
        <name>2-oxoglutarate</name>
        <dbReference type="ChEBI" id="CHEBI:16810"/>
    </ligand>
</feature>
<proteinExistence type="inferred from homology"/>
<reference key="1">
    <citation type="submission" date="2005-08" db="EMBL/GenBank/DDBJ databases">
        <title>Complete sequence of chromosome 1 of Synechococcus elongatus PCC 7942.</title>
        <authorList>
            <consortium name="US DOE Joint Genome Institute"/>
            <person name="Copeland A."/>
            <person name="Lucas S."/>
            <person name="Lapidus A."/>
            <person name="Barry K."/>
            <person name="Detter J.C."/>
            <person name="Glavina T."/>
            <person name="Hammon N."/>
            <person name="Israni S."/>
            <person name="Pitluck S."/>
            <person name="Schmutz J."/>
            <person name="Larimer F."/>
            <person name="Land M."/>
            <person name="Kyrpides N."/>
            <person name="Lykidis A."/>
            <person name="Golden S."/>
            <person name="Richardson P."/>
        </authorList>
    </citation>
    <scope>NUCLEOTIDE SEQUENCE [LARGE SCALE GENOMIC DNA]</scope>
    <source>
        <strain>ATCC 33912 / PCC 7942 / FACHB-805</strain>
    </source>
</reference>
<comment type="cofactor">
    <cofactor evidence="1">
        <name>Fe(2+)</name>
        <dbReference type="ChEBI" id="CHEBI:29033"/>
    </cofactor>
    <text evidence="1">Binds 1 Fe(2+) ion per subunit.</text>
</comment>
<comment type="cofactor">
    <cofactor evidence="1">
        <name>L-ascorbate</name>
        <dbReference type="ChEBI" id="CHEBI:38290"/>
    </cofactor>
</comment>
<keyword id="KW-0223">Dioxygenase</keyword>
<keyword id="KW-0408">Iron</keyword>
<keyword id="KW-0479">Metal-binding</keyword>
<keyword id="KW-0560">Oxidoreductase</keyword>
<keyword id="KW-1185">Reference proteome</keyword>
<keyword id="KW-0847">Vitamin C</keyword>
<name>Y015_SYNE7</name>
<evidence type="ECO:0000255" key="1">
    <source>
        <dbReference type="HAMAP-Rule" id="MF_00657"/>
    </source>
</evidence>
<organism>
    <name type="scientific">Synechococcus elongatus (strain ATCC 33912 / PCC 7942 / FACHB-805)</name>
    <name type="common">Anacystis nidulans R2</name>
    <dbReference type="NCBI Taxonomy" id="1140"/>
    <lineage>
        <taxon>Bacteria</taxon>
        <taxon>Bacillati</taxon>
        <taxon>Cyanobacteriota</taxon>
        <taxon>Cyanophyceae</taxon>
        <taxon>Synechococcales</taxon>
        <taxon>Synechococcaceae</taxon>
        <taxon>Synechococcus</taxon>
    </lineage>
</organism>